<gene>
    <name evidence="1" type="primary">atpB</name>
</gene>
<sequence length="498" mass="53857">MRTNPTTSPPGASTIEEKSTGRIDQIIGPVLDVTFPPGKLPYIYNALVVQSRDTDDKQINVTCEVQQLLGNNRVRAVAMSATDGLMRGMEVIDTGAPLSVPVGGATLGRIFNVLGEPVDNLGPVDSSATFPIHRSAPAFIELDTKLSIFETGIKVVDLLAPYRRGGKIGLFGGAGVGKTVLIMELINNIAKAHGGVSVFGGVGERTREGNDLYMEMKESGVINEKNIEESKVALVYGQMNEPPGARMRVGLTALTMAEYFRDVNKQDVLLFIDNIFRFVQAGSEVSALLGRMPSAVGYQPTLSTEMGSLQERIASTKKGSITSIQAVYVPADDLTDPAPATTFAHLDATTVLSRGLASKGIYPAVDPLDSTSTMLQPRIVGNEHYETAQRVKETLQRYKELQDIIAILGLDELSEEDRLTVARARKIERFLSQPFFVAEVFTGSPGKYVALAETIRGFQLILSGELDGLPEQAFYLVGNIDEASTKAITLEEENKSQK</sequence>
<feature type="chain" id="PRO_0000144553" description="ATP synthase subunit beta, chloroplastic">
    <location>
        <begin position="1"/>
        <end position="498"/>
    </location>
</feature>
<feature type="binding site" evidence="1">
    <location>
        <begin position="172"/>
        <end position="179"/>
    </location>
    <ligand>
        <name>ATP</name>
        <dbReference type="ChEBI" id="CHEBI:30616"/>
    </ligand>
</feature>
<geneLocation type="chloroplast"/>
<keyword id="KW-0066">ATP synthesis</keyword>
<keyword id="KW-0067">ATP-binding</keyword>
<keyword id="KW-0139">CF(1)</keyword>
<keyword id="KW-0150">Chloroplast</keyword>
<keyword id="KW-0375">Hydrogen ion transport</keyword>
<keyword id="KW-0406">Ion transport</keyword>
<keyword id="KW-0472">Membrane</keyword>
<keyword id="KW-0547">Nucleotide-binding</keyword>
<keyword id="KW-0934">Plastid</keyword>
<keyword id="KW-1185">Reference proteome</keyword>
<keyword id="KW-0793">Thylakoid</keyword>
<keyword id="KW-1278">Translocase</keyword>
<keyword id="KW-0813">Transport</keyword>
<name>ATPB_WHEAT</name>
<reference key="1">
    <citation type="journal article" date="1985" name="Plant Mol. Biol.">
        <title>Nucleotide sequences of the genes for the alpha, beta and epsilon subunits of wheat chloroplast ATP synthase.</title>
        <authorList>
            <person name="Howe C.J."/>
            <person name="Fearnley I.M."/>
            <person name="Walker J.E."/>
            <person name="Dyer T.A."/>
            <person name="Gray J.C."/>
        </authorList>
        <dbReference type="AGRICOLA" id="IND85057686"/>
    </citation>
    <scope>NUCLEOTIDE SEQUENCE [GENOMIC DNA]</scope>
</reference>
<reference key="2">
    <citation type="journal article" date="2000" name="Plant Mol. Biol. Rep.">
        <title>Chinese spring wheat (Triticum aestivum L.) chloroplast genome: complete sequence and contig clones.</title>
        <authorList>
            <person name="Ogihara Y."/>
            <person name="Isono K."/>
            <person name="Kojima T."/>
            <person name="Endo A."/>
            <person name="Hanaoka M."/>
            <person name="Shiina T."/>
            <person name="Terachi T."/>
            <person name="Utsugi S."/>
            <person name="Murata M."/>
            <person name="Mori N."/>
            <person name="Takumi S."/>
            <person name="Ikeo K."/>
            <person name="Gojobori T."/>
            <person name="Murai R."/>
            <person name="Murai K."/>
            <person name="Matsuoka Y."/>
            <person name="Ohnishi Y."/>
            <person name="Tajiri H."/>
            <person name="Tsunewaki K."/>
        </authorList>
    </citation>
    <scope>NUCLEOTIDE SEQUENCE [LARGE SCALE GENOMIC DNA]</scope>
    <source>
        <strain>cv. Chinese Spring</strain>
    </source>
</reference>
<proteinExistence type="inferred from homology"/>
<organism>
    <name type="scientific">Triticum aestivum</name>
    <name type="common">Wheat</name>
    <dbReference type="NCBI Taxonomy" id="4565"/>
    <lineage>
        <taxon>Eukaryota</taxon>
        <taxon>Viridiplantae</taxon>
        <taxon>Streptophyta</taxon>
        <taxon>Embryophyta</taxon>
        <taxon>Tracheophyta</taxon>
        <taxon>Spermatophyta</taxon>
        <taxon>Magnoliopsida</taxon>
        <taxon>Liliopsida</taxon>
        <taxon>Poales</taxon>
        <taxon>Poaceae</taxon>
        <taxon>BOP clade</taxon>
        <taxon>Pooideae</taxon>
        <taxon>Triticodae</taxon>
        <taxon>Triticeae</taxon>
        <taxon>Triticinae</taxon>
        <taxon>Triticum</taxon>
    </lineage>
</organism>
<dbReference type="EC" id="7.1.2.2" evidence="1"/>
<dbReference type="EMBL" id="M16843">
    <property type="protein sequence ID" value="AAA84726.1"/>
    <property type="molecule type" value="Genomic_DNA"/>
</dbReference>
<dbReference type="EMBL" id="AB042240">
    <property type="protein sequence ID" value="BAB47041.1"/>
    <property type="molecule type" value="Genomic_DNA"/>
</dbReference>
<dbReference type="PIR" id="S07399">
    <property type="entry name" value="PWWTB"/>
</dbReference>
<dbReference type="RefSeq" id="NP_114266.1">
    <property type="nucleotide sequence ID" value="NC_002762.1"/>
</dbReference>
<dbReference type="SMR" id="P20858"/>
<dbReference type="STRING" id="4565.P20858"/>
<dbReference type="PaxDb" id="4565-Traes_1AS_45DF41500.1"/>
<dbReference type="EnsemblPlants" id="TraesCS2D03G0659500.1">
    <property type="protein sequence ID" value="TraesCS2D03G0659500.1.CDS1"/>
    <property type="gene ID" value="TraesCS2D03G0659500"/>
</dbReference>
<dbReference type="EnsemblPlants" id="TraesKAR6B01G0220240.1">
    <property type="protein sequence ID" value="cds.TraesKAR6B01G0220240.1"/>
    <property type="gene ID" value="TraesKAR6B01G0220240"/>
</dbReference>
<dbReference type="EnsemblPlants" id="TraesKARUn01G0029790.1">
    <property type="protein sequence ID" value="cds.TraesKARUn01G0029790.1"/>
    <property type="gene ID" value="TraesKARUn01G0029790"/>
</dbReference>
<dbReference type="EnsemblPlants" id="TraesKARUn01G0031890.1">
    <property type="protein sequence ID" value="cds.TraesKARUn01G0031890.1"/>
    <property type="gene ID" value="TraesKARUn01G0031890"/>
</dbReference>
<dbReference type="EnsemblPlants" id="TraesKARUn01G0036600.1">
    <property type="protein sequence ID" value="cds.TraesKARUn01G0036600.1"/>
    <property type="gene ID" value="TraesKARUn01G0036600"/>
</dbReference>
<dbReference type="EnsemblPlants" id="TraesKARUn01G0065640.1">
    <property type="protein sequence ID" value="cds.TraesKARUn01G0065640.1"/>
    <property type="gene ID" value="TraesKARUn01G0065640"/>
</dbReference>
<dbReference type="EnsemblPlants" id="TraesKARUn01G0066420.1">
    <property type="protein sequence ID" value="cds.TraesKARUn01G0066420.1"/>
    <property type="gene ID" value="TraesKARUn01G0066420"/>
</dbReference>
<dbReference type="EnsemblPlants" id="TraesKARUn01G0066600.1">
    <property type="protein sequence ID" value="cds.TraesKARUn01G0066600.1"/>
    <property type="gene ID" value="TraesKARUn01G0066600"/>
</dbReference>
<dbReference type="EnsemblPlants" id="TraesKARUn01G0067220.1">
    <property type="protein sequence ID" value="cds.TraesKARUn01G0067220.1"/>
    <property type="gene ID" value="TraesKARUn01G0067220"/>
</dbReference>
<dbReference type="EnsemblPlants" id="TraesKARUn01G0068100.1">
    <property type="protein sequence ID" value="cds.TraesKARUn01G0068100.1"/>
    <property type="gene ID" value="TraesKARUn01G0068100"/>
</dbReference>
<dbReference type="EnsemblPlants" id="TraesKARUn01G0068320.1">
    <property type="protein sequence ID" value="cds.TraesKARUn01G0068320.1"/>
    <property type="gene ID" value="TraesKARUn01G0068320"/>
</dbReference>
<dbReference type="EnsemblPlants" id="TraesKARUn01G0068390.1">
    <property type="protein sequence ID" value="cds.TraesKARUn01G0068390.1"/>
    <property type="gene ID" value="TraesKARUn01G0068390"/>
</dbReference>
<dbReference type="EnsemblPlants" id="TraesKARUn01G0068530.1">
    <property type="protein sequence ID" value="cds.TraesKARUn01G0068530.1"/>
    <property type="gene ID" value="TraesKARUn01G0068530"/>
</dbReference>
<dbReference type="EnsemblPlants" id="TraesKARUn01G0068710.1">
    <property type="protein sequence ID" value="cds.TraesKARUn01G0068710.1"/>
    <property type="gene ID" value="TraesKARUn01G0068710"/>
</dbReference>
<dbReference type="EnsemblPlants" id="TraesKARUn01G0068760.1">
    <property type="protein sequence ID" value="cds.TraesKARUn01G0068760.1"/>
    <property type="gene ID" value="TraesKARUn01G0068760"/>
</dbReference>
<dbReference type="EnsemblPlants" id="TraesKARUn01G0069390.1">
    <property type="protein sequence ID" value="cds.TraesKARUn01G0069390.1"/>
    <property type="gene ID" value="TraesKARUn01G0069390"/>
</dbReference>
<dbReference type="EnsemblPlants" id="TraesKARUn01G0070310.1">
    <property type="protein sequence ID" value="cds.TraesKARUn01G0070310.1"/>
    <property type="gene ID" value="TraesKARUn01G0070310"/>
</dbReference>
<dbReference type="EnsemblPlants" id="TraesKARUn01G0071120.1">
    <property type="protein sequence ID" value="cds.TraesKARUn01G0071120.1"/>
    <property type="gene ID" value="TraesKARUn01G0071120"/>
</dbReference>
<dbReference type="EnsemblPlants" id="TraesKARUn01G0072330.1">
    <property type="protein sequence ID" value="cds.TraesKARUn01G0072330.1"/>
    <property type="gene ID" value="TraesKARUn01G0072330"/>
</dbReference>
<dbReference type="EnsemblPlants" id="TraesKARUn01G0074150.1">
    <property type="protein sequence ID" value="cds.TraesKARUn01G0074150.1"/>
    <property type="gene ID" value="TraesKARUn01G0074150"/>
</dbReference>
<dbReference type="EnsemblPlants" id="TraesKARUn01G0075450.1">
    <property type="protein sequence ID" value="cds.TraesKARUn01G0075450.1"/>
    <property type="gene ID" value="TraesKARUn01G0075450"/>
</dbReference>
<dbReference type="EnsemblPlants" id="TraesKARUn01G0076120.1">
    <property type="protein sequence ID" value="cds.TraesKARUn01G0076120.1"/>
    <property type="gene ID" value="TraesKARUn01G0076120"/>
</dbReference>
<dbReference type="EnsemblPlants" id="TraesKARUn01G0077150.1">
    <property type="protein sequence ID" value="cds.TraesKARUn01G0077150.1"/>
    <property type="gene ID" value="TraesKARUn01G0077150"/>
</dbReference>
<dbReference type="EnsemblPlants" id="TraesKARUn01G0078910.1">
    <property type="protein sequence ID" value="cds.TraesKARUn01G0078910.1"/>
    <property type="gene ID" value="TraesKARUn01G0078910"/>
</dbReference>
<dbReference type="EnsemblPlants" id="TraesKARUn01G0081070.1">
    <property type="protein sequence ID" value="cds.TraesKARUn01G0081070.1"/>
    <property type="gene ID" value="TraesKARUn01G0081070"/>
</dbReference>
<dbReference type="EnsemblPlants" id="TraesKARUn01G0084140.1">
    <property type="protein sequence ID" value="cds.TraesKARUn01G0084140.1"/>
    <property type="gene ID" value="TraesKARUn01G0084140"/>
</dbReference>
<dbReference type="EnsemblPlants" id="TraesKARUn01G0085090.1">
    <property type="protein sequence ID" value="cds.TraesKARUn01G0085090.1"/>
    <property type="gene ID" value="TraesKARUn01G0085090"/>
</dbReference>
<dbReference type="EnsemblPlants" id="TraesKARUn01G0085410.1">
    <property type="protein sequence ID" value="cds.TraesKARUn01G0085410.1"/>
    <property type="gene ID" value="TraesKARUn01G0085410"/>
</dbReference>
<dbReference type="EnsemblPlants" id="TraesKARUn01G0088710.1">
    <property type="protein sequence ID" value="cds.TraesKARUn01G0088710.1"/>
    <property type="gene ID" value="TraesKARUn01G0088710"/>
</dbReference>
<dbReference type="EnsemblPlants" id="TraesKARUn01G0095670.1">
    <property type="protein sequence ID" value="cds.TraesKARUn01G0095670.1"/>
    <property type="gene ID" value="TraesKARUn01G0095670"/>
</dbReference>
<dbReference type="EnsemblPlants" id="TraesKARUn01G0098060.1">
    <property type="protein sequence ID" value="cds.TraesKARUn01G0098060.1"/>
    <property type="gene ID" value="TraesKARUn01G0098060"/>
</dbReference>
<dbReference type="EnsemblPlants" id="TraesKARUn01G0100860.1">
    <property type="protein sequence ID" value="cds.TraesKARUn01G0100860.1"/>
    <property type="gene ID" value="TraesKARUn01G0100860"/>
</dbReference>
<dbReference type="EnsemblPlants" id="TraesKARUn01G0107170.1">
    <property type="protein sequence ID" value="cds.TraesKARUn01G0107170.1"/>
    <property type="gene ID" value="TraesKARUn01G0107170"/>
</dbReference>
<dbReference type="EnsemblPlants" id="TraesKARUn01G0109070.1">
    <property type="protein sequence ID" value="cds.TraesKARUn01G0109070.1"/>
    <property type="gene ID" value="TraesKARUn01G0109070"/>
</dbReference>
<dbReference type="EnsemblPlants" id="TraesKARUn01G0109410.1">
    <property type="protein sequence ID" value="cds.TraesKARUn01G0109410.1"/>
    <property type="gene ID" value="TraesKARUn01G0109410"/>
</dbReference>
<dbReference type="EnsemblPlants" id="TraesKARUn01G0109460.1">
    <property type="protein sequence ID" value="cds.TraesKARUn01G0109460.1"/>
    <property type="gene ID" value="TraesKARUn01G0109460"/>
</dbReference>
<dbReference type="EnsemblPlants" id="TraesKARUn01G0109780.1">
    <property type="protein sequence ID" value="cds.TraesKARUn01G0109780.1"/>
    <property type="gene ID" value="TraesKARUn01G0109780"/>
</dbReference>
<dbReference type="EnsemblPlants" id="TraesKARUn01G0113510.1">
    <property type="protein sequence ID" value="cds.TraesKARUn01G0113510.1"/>
    <property type="gene ID" value="TraesKARUn01G0113510"/>
</dbReference>
<dbReference type="EnsemblPlants" id="TraesKARUn01G0116130.1">
    <property type="protein sequence ID" value="cds.TraesKARUn01G0116130.1"/>
    <property type="gene ID" value="TraesKARUn01G0116130"/>
</dbReference>
<dbReference type="EnsemblPlants" id="TraesKARUn01G0116330.1">
    <property type="protein sequence ID" value="cds.TraesKARUn01G0116330.1"/>
    <property type="gene ID" value="TraesKARUn01G0116330"/>
</dbReference>
<dbReference type="EnsemblPlants" id="TraesKARUn01G0118780.1">
    <property type="protein sequence ID" value="cds.TraesKARUn01G0118780.1"/>
    <property type="gene ID" value="TraesKARUn01G0118780"/>
</dbReference>
<dbReference type="EnsemblPlants" id="TraesKARUn01G0118890.1">
    <property type="protein sequence ID" value="cds.TraesKARUn01G0118890.1"/>
    <property type="gene ID" value="TraesKARUn01G0118890"/>
</dbReference>
<dbReference type="EnsemblPlants" id="TraesKARUn01G0118950.1">
    <property type="protein sequence ID" value="cds.TraesKARUn01G0118950.1"/>
    <property type="gene ID" value="TraesKARUn01G0118950"/>
</dbReference>
<dbReference type="EnsemblPlants" id="TraesKARUn01G0122640.1">
    <property type="protein sequence ID" value="cds.TraesKARUn01G0122640.1"/>
    <property type="gene ID" value="TraesKARUn01G0122640"/>
</dbReference>
<dbReference type="EnsemblPlants" id="TraesKARUn01G0124470.1">
    <property type="protein sequence ID" value="cds.TraesKARUn01G0124470.1"/>
    <property type="gene ID" value="TraesKARUn01G0124470"/>
</dbReference>
<dbReference type="EnsemblPlants" id="TraesKARUn01G0125760.1">
    <property type="protein sequence ID" value="cds.TraesKARUn01G0125760.1"/>
    <property type="gene ID" value="TraesKARUn01G0125760"/>
</dbReference>
<dbReference type="EnsemblPlants" id="TraesKARUn01G0128530.1">
    <property type="protein sequence ID" value="cds.TraesKARUn01G0128530.1"/>
    <property type="gene ID" value="TraesKARUn01G0128530"/>
</dbReference>
<dbReference type="EnsemblPlants" id="TraesKARUn01G0130000.1">
    <property type="protein sequence ID" value="cds.TraesKARUn01G0130000.1"/>
    <property type="gene ID" value="TraesKARUn01G0130000"/>
</dbReference>
<dbReference type="EnsemblPlants" id="TraesKARUn01G0132390.1">
    <property type="protein sequence ID" value="cds.TraesKARUn01G0132390.1"/>
    <property type="gene ID" value="TraesKARUn01G0132390"/>
</dbReference>
<dbReference type="EnsemblPlants" id="TraesKARUn01G0151560.1">
    <property type="protein sequence ID" value="cds.TraesKARUn01G0151560.1"/>
    <property type="gene ID" value="TraesKARUn01G0151560"/>
</dbReference>
<dbReference type="EnsemblPlants" id="TraesKARUn01G0156930.1">
    <property type="protein sequence ID" value="cds.TraesKARUn01G0156930.1"/>
    <property type="gene ID" value="TraesKARUn01G0156930"/>
</dbReference>
<dbReference type="EnsemblPlants" id="TraesKARUn01G0159660.1">
    <property type="protein sequence ID" value="cds.TraesKARUn01G0159660.1"/>
    <property type="gene ID" value="TraesKARUn01G0159660"/>
</dbReference>
<dbReference type="EnsemblPlants" id="TraesKARUn01G0169840.1">
    <property type="protein sequence ID" value="cds.TraesKARUn01G0169840.1"/>
    <property type="gene ID" value="TraesKARUn01G0169840"/>
</dbReference>
<dbReference type="EnsemblPlants" id="TraesKARUn01G0173020.1">
    <property type="protein sequence ID" value="cds.TraesKARUn01G0173020.1"/>
    <property type="gene ID" value="TraesKARUn01G0173020"/>
</dbReference>
<dbReference type="EnsemblPlants" id="TraesKARUn01G0180360.1">
    <property type="protein sequence ID" value="cds.TraesKARUn01G0180360.1"/>
    <property type="gene ID" value="TraesKARUn01G0180360"/>
</dbReference>
<dbReference type="EnsemblPlants" id="TraesKARUn01G0180680.1">
    <property type="protein sequence ID" value="cds.TraesKARUn01G0180680.1"/>
    <property type="gene ID" value="TraesKARUn01G0180680"/>
</dbReference>
<dbReference type="EnsemblPlants" id="TraesKARUn01G0181320.1">
    <property type="protein sequence ID" value="cds.TraesKARUn01G0181320.1"/>
    <property type="gene ID" value="TraesKARUn01G0181320"/>
</dbReference>
<dbReference type="EnsemblPlants" id="TraesKARUn01G0182650.1">
    <property type="protein sequence ID" value="cds.TraesKARUn01G0182650.1"/>
    <property type="gene ID" value="TraesKARUn01G0182650"/>
</dbReference>
<dbReference type="EnsemblPlants" id="TraesKARUn01G0184130.1">
    <property type="protein sequence ID" value="cds.TraesKARUn01G0184130.1"/>
    <property type="gene ID" value="TraesKARUn01G0184130"/>
</dbReference>
<dbReference type="EnsemblPlants" id="TraesKARUn01G0188860.1">
    <property type="protein sequence ID" value="cds.TraesKARUn01G0188860.1"/>
    <property type="gene ID" value="TraesKARUn01G0188860"/>
</dbReference>
<dbReference type="EnsemblPlants" id="TraesPARA_EIv1.0_2055020.1">
    <property type="protein sequence ID" value="TraesPARA_EIv1.0_2055020.1.CDS1"/>
    <property type="gene ID" value="TraesPARA_EIv1.0_2055020"/>
</dbReference>
<dbReference type="EnsemblPlants" id="TraesPARA_EIv1.0_2055620.1">
    <property type="protein sequence ID" value="TraesPARA_EIv1.0_2055620.1.CDS1"/>
    <property type="gene ID" value="TraesPARA_EIv1.0_2055620"/>
</dbReference>
<dbReference type="EnsemblPlants" id="TraesPARA_EIv1.0_2643410.1">
    <property type="protein sequence ID" value="TraesPARA_EIv1.0_2643410.1.CDS1"/>
    <property type="gene ID" value="TraesPARA_EIv1.0_2643410"/>
</dbReference>
<dbReference type="EnsemblPlants" id="TraesPARA_EIv1.0_2643630.1">
    <property type="protein sequence ID" value="TraesPARA_EIv1.0_2643630.1.CDS1"/>
    <property type="gene ID" value="TraesPARA_EIv1.0_2643630"/>
</dbReference>
<dbReference type="EnsemblPlants" id="TraesPARA_EIv1.0_2643990.1">
    <property type="protein sequence ID" value="TraesPARA_EIv1.0_2643990.1.CDS1"/>
    <property type="gene ID" value="TraesPARA_EIv1.0_2643990"/>
</dbReference>
<dbReference type="EnsemblPlants" id="TraesPARA_EIv1.0_2644100.1">
    <property type="protein sequence ID" value="TraesPARA_EIv1.0_2644100.1.CDS1"/>
    <property type="gene ID" value="TraesPARA_EIv1.0_2644100"/>
</dbReference>
<dbReference type="EnsemblPlants" id="TraesPARA_EIv1.0_2645570.1">
    <property type="protein sequence ID" value="TraesPARA_EIv1.0_2645570.1.CDS1"/>
    <property type="gene ID" value="TraesPARA_EIv1.0_2645570"/>
</dbReference>
<dbReference type="EnsemblPlants" id="TraesPARA_EIv1.0_2645740.1">
    <property type="protein sequence ID" value="TraesPARA_EIv1.0_2645740.1.CDS1"/>
    <property type="gene ID" value="TraesPARA_EIv1.0_2645740"/>
</dbReference>
<dbReference type="EnsemblPlants" id="TraesPARA_EIv1.0_2645940.1">
    <property type="protein sequence ID" value="TraesPARA_EIv1.0_2645940.1.CDS1"/>
    <property type="gene ID" value="TraesPARA_EIv1.0_2645940"/>
</dbReference>
<dbReference type="EnsemblPlants" id="TraesPARA_EIv1.0_2647060.1">
    <property type="protein sequence ID" value="TraesPARA_EIv1.0_2647060.1.CDS1"/>
    <property type="gene ID" value="TraesPARA_EIv1.0_2647060"/>
</dbReference>
<dbReference type="EnsemblPlants" id="TraesPARA_EIv1.0_2647900.1">
    <property type="protein sequence ID" value="TraesPARA_EIv1.0_2647900.1.CDS1"/>
    <property type="gene ID" value="TraesPARA_EIv1.0_2647900"/>
</dbReference>
<dbReference type="EnsemblPlants" id="TraesPARA_EIv1.0_2648540.1">
    <property type="protein sequence ID" value="TraesPARA_EIv1.0_2648540.1.CDS1"/>
    <property type="gene ID" value="TraesPARA_EIv1.0_2648540"/>
</dbReference>
<dbReference type="EnsemblPlants" id="TraesPARA_EIv1.0_2648710.1">
    <property type="protein sequence ID" value="TraesPARA_EIv1.0_2648710.1.CDS1"/>
    <property type="gene ID" value="TraesPARA_EIv1.0_2648710"/>
</dbReference>
<dbReference type="EnsemblPlants" id="TraesPARA_EIv1.0_2648960.1">
    <property type="protein sequence ID" value="TraesPARA_EIv1.0_2648960.1.CDS1"/>
    <property type="gene ID" value="TraesPARA_EIv1.0_2648960"/>
</dbReference>
<dbReference type="EnsemblPlants" id="TraesPARA_EIv1.0_2649130.1">
    <property type="protein sequence ID" value="TraesPARA_EIv1.0_2649130.1.CDS1"/>
    <property type="gene ID" value="TraesPARA_EIv1.0_2649130"/>
</dbReference>
<dbReference type="EnsemblPlants" id="TraesPARA_EIv1.0_2649230.1">
    <property type="protein sequence ID" value="TraesPARA_EIv1.0_2649230.1.CDS1"/>
    <property type="gene ID" value="TraesPARA_EIv1.0_2649230"/>
</dbReference>
<dbReference type="EnsemblPlants" id="TraesPARA_EIv1.0_2649350.1">
    <property type="protein sequence ID" value="TraesPARA_EIv1.0_2649350.1.CDS1"/>
    <property type="gene ID" value="TraesPARA_EIv1.0_2649350"/>
</dbReference>
<dbReference type="EnsemblPlants" id="TraesPARA_EIv1.0_2650070.1">
    <property type="protein sequence ID" value="TraesPARA_EIv1.0_2650070.1.CDS1"/>
    <property type="gene ID" value="TraesPARA_EIv1.0_2650070"/>
</dbReference>
<dbReference type="EnsemblPlants" id="TraesPARA_EIv1.0_2650250.1">
    <property type="protein sequence ID" value="TraesPARA_EIv1.0_2650250.1.CDS1"/>
    <property type="gene ID" value="TraesPARA_EIv1.0_2650250"/>
</dbReference>
<dbReference type="EnsemblPlants" id="TraesPARA_EIv1.0_2650480.1">
    <property type="protein sequence ID" value="TraesPARA_EIv1.0_2650480.1.CDS1"/>
    <property type="gene ID" value="TraesPARA_EIv1.0_2650480"/>
</dbReference>
<dbReference type="EnsemblPlants" id="TraesPARA_EIv1.0_2651220.1">
    <property type="protein sequence ID" value="TraesPARA_EIv1.0_2651220.1.CDS1"/>
    <property type="gene ID" value="TraesPARA_EIv1.0_2651220"/>
</dbReference>
<dbReference type="EnsemblPlants" id="TraesPARA_EIv1.0_2651330.1">
    <property type="protein sequence ID" value="TraesPARA_EIv1.0_2651330.1.CDS1"/>
    <property type="gene ID" value="TraesPARA_EIv1.0_2651330"/>
</dbReference>
<dbReference type="EnsemblPlants" id="TraesPARA_EIv1.0_2652330.1">
    <property type="protein sequence ID" value="TraesPARA_EIv1.0_2652330.1.CDS1"/>
    <property type="gene ID" value="TraesPARA_EIv1.0_2652330"/>
</dbReference>
<dbReference type="EnsemblPlants" id="TraesPARA_EIv1.0_2652850.1">
    <property type="protein sequence ID" value="TraesPARA_EIv1.0_2652850.1.CDS1"/>
    <property type="gene ID" value="TraesPARA_EIv1.0_2652850"/>
</dbReference>
<dbReference type="EnsemblPlants" id="TraesPARA_EIv1.0_2653150.1">
    <property type="protein sequence ID" value="TraesPARA_EIv1.0_2653150.1.CDS1"/>
    <property type="gene ID" value="TraesPARA_EIv1.0_2653150"/>
</dbReference>
<dbReference type="EnsemblPlants" id="TraesPARA_EIv1.0_2653370.1">
    <property type="protein sequence ID" value="TraesPARA_EIv1.0_2653370.1.CDS1"/>
    <property type="gene ID" value="TraesPARA_EIv1.0_2653370"/>
</dbReference>
<dbReference type="EnsemblPlants" id="TraesPARA_EIv1.0_2653980.1">
    <property type="protein sequence ID" value="TraesPARA_EIv1.0_2653980.1.CDS1"/>
    <property type="gene ID" value="TraesPARA_EIv1.0_2653980"/>
</dbReference>
<dbReference type="EnsemblPlants" id="TraesPARA_EIv1.0_2654210.1">
    <property type="protein sequence ID" value="TraesPARA_EIv1.0_2654210.1.CDS1"/>
    <property type="gene ID" value="TraesPARA_EIv1.0_2654210"/>
</dbReference>
<dbReference type="EnsemblPlants" id="TraesPARA_EIv1.0_2654310.1">
    <property type="protein sequence ID" value="TraesPARA_EIv1.0_2654310.1.CDS1"/>
    <property type="gene ID" value="TraesPARA_EIv1.0_2654310"/>
</dbReference>
<dbReference type="EnsemblPlants" id="TraesPARA_EIv1.0_2655240.1">
    <property type="protein sequence ID" value="TraesPARA_EIv1.0_2655240.1.CDS1"/>
    <property type="gene ID" value="TraesPARA_EIv1.0_2655240"/>
</dbReference>
<dbReference type="EnsemblPlants" id="TraesPARA_EIv1.0_2655630.1">
    <property type="protein sequence ID" value="TraesPARA_EIv1.0_2655630.1.CDS1"/>
    <property type="gene ID" value="TraesPARA_EIv1.0_2655630"/>
</dbReference>
<dbReference type="EnsemblPlants" id="TraesPARA_EIv1.0_2656120.1">
    <property type="protein sequence ID" value="TraesPARA_EIv1.0_2656120.1.CDS1"/>
    <property type="gene ID" value="TraesPARA_EIv1.0_2656120"/>
</dbReference>
<dbReference type="EnsemblPlants" id="TraesPARA_EIv1.0_2656390.1">
    <property type="protein sequence ID" value="TraesPARA_EIv1.0_2656390.1.CDS1"/>
    <property type="gene ID" value="TraesPARA_EIv1.0_2656390"/>
</dbReference>
<dbReference type="EnsemblPlants" id="TraesPARA_EIv1.0_2656830.1">
    <property type="protein sequence ID" value="TraesPARA_EIv1.0_2656830.1.CDS1"/>
    <property type="gene ID" value="TraesPARA_EIv1.0_2656830"/>
</dbReference>
<dbReference type="EnsemblPlants" id="TraesPARA_EIv1.0_2657030.1">
    <property type="protein sequence ID" value="TraesPARA_EIv1.0_2657030.1.CDS1"/>
    <property type="gene ID" value="TraesPARA_EIv1.0_2657030"/>
</dbReference>
<dbReference type="EnsemblPlants" id="TraesPARA_EIv1.0_2657120.1">
    <property type="protein sequence ID" value="TraesPARA_EIv1.0_2657120.1.CDS1"/>
    <property type="gene ID" value="TraesPARA_EIv1.0_2657120"/>
</dbReference>
<dbReference type="EnsemblPlants" id="TraesPARA_EIv1.0_2658470.1">
    <property type="protein sequence ID" value="TraesPARA_EIv1.0_2658470.1.CDS1"/>
    <property type="gene ID" value="TraesPARA_EIv1.0_2658470"/>
</dbReference>
<dbReference type="EnsemblPlants" id="TraesPARA_EIv1.0_2659980.1">
    <property type="protein sequence ID" value="TraesPARA_EIv1.0_2659980.1.CDS1"/>
    <property type="gene ID" value="TraesPARA_EIv1.0_2659980"/>
</dbReference>
<dbReference type="EnsemblPlants" id="TraesPARA_EIv1.0_2660070.1">
    <property type="protein sequence ID" value="TraesPARA_EIv1.0_2660070.1.CDS1"/>
    <property type="gene ID" value="TraesPARA_EIv1.0_2660070"/>
</dbReference>
<dbReference type="EnsemblPlants" id="TraesPARA_EIv1.0_2662920.1">
    <property type="protein sequence ID" value="TraesPARA_EIv1.0_2662920.1.CDS1"/>
    <property type="gene ID" value="TraesPARA_EIv1.0_2662920"/>
</dbReference>
<dbReference type="EnsemblPlants" id="TraesPARA_EIv1.0_2663070.1">
    <property type="protein sequence ID" value="TraesPARA_EIv1.0_2663070.1.CDS1"/>
    <property type="gene ID" value="TraesPARA_EIv1.0_2663070"/>
</dbReference>
<dbReference type="EnsemblPlants" id="TraesPARA_EIv1.0_2663170.1">
    <property type="protein sequence ID" value="TraesPARA_EIv1.0_2663170.1.CDS1"/>
    <property type="gene ID" value="TraesPARA_EIv1.0_2663170"/>
</dbReference>
<dbReference type="EnsemblPlants" id="TraesPARA_EIv1.0_2663520.1">
    <property type="protein sequence ID" value="TraesPARA_EIv1.0_2663520.1.CDS1"/>
    <property type="gene ID" value="TraesPARA_EIv1.0_2663520"/>
</dbReference>
<dbReference type="EnsemblPlants" id="TraesPARA_EIv1.0_2663650.1">
    <property type="protein sequence ID" value="TraesPARA_EIv1.0_2663650.1.CDS1"/>
    <property type="gene ID" value="TraesPARA_EIv1.0_2663650"/>
</dbReference>
<dbReference type="EnsemblPlants" id="TraesPARA_EIv1.0_2663690.1">
    <property type="protein sequence ID" value="TraesPARA_EIv1.0_2663690.1.CDS1"/>
    <property type="gene ID" value="TraesPARA_EIv1.0_2663690"/>
</dbReference>
<dbReference type="EnsemblPlants" id="TraesPARA_EIv1.0_2666360.1">
    <property type="protein sequence ID" value="TraesPARA_EIv1.0_2666360.1.CDS1"/>
    <property type="gene ID" value="TraesPARA_EIv1.0_2666360"/>
</dbReference>
<dbReference type="EnsemblPlants" id="TraesPARA_EIv1.0_2666660.1">
    <property type="protein sequence ID" value="TraesPARA_EIv1.0_2666660.1.CDS1"/>
    <property type="gene ID" value="TraesPARA_EIv1.0_2666660"/>
</dbReference>
<dbReference type="EnsemblPlants" id="TraesPARA_EIv1.0_2666760.1">
    <property type="protein sequence ID" value="TraesPARA_EIv1.0_2666760.1.CDS1"/>
    <property type="gene ID" value="TraesPARA_EIv1.0_2666760"/>
</dbReference>
<dbReference type="EnsemblPlants" id="TraesPARA_EIv1.0_2666950.1">
    <property type="protein sequence ID" value="TraesPARA_EIv1.0_2666950.1.CDS1"/>
    <property type="gene ID" value="TraesPARA_EIv1.0_2666950"/>
</dbReference>
<dbReference type="EnsemblPlants" id="TraesPARA_EIv1.0_2667080.1">
    <property type="protein sequence ID" value="TraesPARA_EIv1.0_2667080.1.CDS1"/>
    <property type="gene ID" value="TraesPARA_EIv1.0_2667080"/>
</dbReference>
<dbReference type="EnsemblPlants" id="TraesPARA_EIv1.0_2668490.1">
    <property type="protein sequence ID" value="TraesPARA_EIv1.0_2668490.1.CDS1"/>
    <property type="gene ID" value="TraesPARA_EIv1.0_2668490"/>
</dbReference>
<dbReference type="EnsemblPlants" id="TraesPARA_EIv1.0_2669270.1">
    <property type="protein sequence ID" value="TraesPARA_EIv1.0_2669270.1.CDS1"/>
    <property type="gene ID" value="TraesPARA_EIv1.0_2669270"/>
</dbReference>
<dbReference type="EnsemblPlants" id="TraesPARA_EIv1.0_2669330.1">
    <property type="protein sequence ID" value="TraesPARA_EIv1.0_2669330.1.CDS1"/>
    <property type="gene ID" value="TraesPARA_EIv1.0_2669330"/>
</dbReference>
<dbReference type="EnsemblPlants" id="TraesPARA_EIv1.0_2669520.1">
    <property type="protein sequence ID" value="TraesPARA_EIv1.0_2669520.1.CDS1"/>
    <property type="gene ID" value="TraesPARA_EIv1.0_2669520"/>
</dbReference>
<dbReference type="EnsemblPlants" id="TraesPARA_EIv1.0_2669960.1">
    <property type="protein sequence ID" value="TraesPARA_EIv1.0_2669960.1.CDS1"/>
    <property type="gene ID" value="TraesPARA_EIv1.0_2669960"/>
</dbReference>
<dbReference type="EnsemblPlants" id="TraesPARA_EIv1.0_2670200.1">
    <property type="protein sequence ID" value="TraesPARA_EIv1.0_2670200.1.CDS1"/>
    <property type="gene ID" value="TraesPARA_EIv1.0_2670200"/>
</dbReference>
<dbReference type="EnsemblPlants" id="TraesPARA_EIv1.0_2670420.1">
    <property type="protein sequence ID" value="TraesPARA_EIv1.0_2670420.1.CDS1"/>
    <property type="gene ID" value="TraesPARA_EIv1.0_2670420"/>
</dbReference>
<dbReference type="EnsemblPlants" id="TraesPARA_EIv1.0_2671460.1">
    <property type="protein sequence ID" value="TraesPARA_EIv1.0_2671460.1.CDS1"/>
    <property type="gene ID" value="TraesPARA_EIv1.0_2671460"/>
</dbReference>
<dbReference type="EnsemblPlants" id="TraesPARA_EIv1.0_2671850.1">
    <property type="protein sequence ID" value="TraesPARA_EIv1.0_2671850.1.CDS1"/>
    <property type="gene ID" value="TraesPARA_EIv1.0_2671850"/>
</dbReference>
<dbReference type="EnsemblPlants" id="TraesPARA_EIv1.0_2672850.1">
    <property type="protein sequence ID" value="TraesPARA_EIv1.0_2672850.1.CDS1"/>
    <property type="gene ID" value="TraesPARA_EIv1.0_2672850"/>
</dbReference>
<dbReference type="EnsemblPlants" id="TraesPARA_EIv1.0_2673720.1">
    <property type="protein sequence ID" value="TraesPARA_EIv1.0_2673720.1.CDS1"/>
    <property type="gene ID" value="TraesPARA_EIv1.0_2673720"/>
</dbReference>
<dbReference type="EnsemblPlants" id="TraesPARA_EIv1.0_2674270.1">
    <property type="protein sequence ID" value="TraesPARA_EIv1.0_2674270.1.CDS1"/>
    <property type="gene ID" value="TraesPARA_EIv1.0_2674270"/>
</dbReference>
<dbReference type="EnsemblPlants" id="TraesPARA_EIv1.0_2677450.1">
    <property type="protein sequence ID" value="TraesPARA_EIv1.0_2677450.1.CDS1"/>
    <property type="gene ID" value="TraesPARA_EIv1.0_2677450"/>
</dbReference>
<dbReference type="EnsemblPlants" id="TraesPARA_EIv1.0_2680140.1">
    <property type="protein sequence ID" value="TraesPARA_EIv1.0_2680140.1.CDS1"/>
    <property type="gene ID" value="TraesPARA_EIv1.0_2680140"/>
</dbReference>
<dbReference type="EnsemblPlants" id="TraesPARA_EIv1.0_2680500.1">
    <property type="protein sequence ID" value="TraesPARA_EIv1.0_2680500.1.CDS1"/>
    <property type="gene ID" value="TraesPARA_EIv1.0_2680500"/>
</dbReference>
<dbReference type="EnsemblPlants" id="TraesPARA_EIv1.0_2681750.1">
    <property type="protein sequence ID" value="TraesPARA_EIv1.0_2681750.1.CDS1"/>
    <property type="gene ID" value="TraesPARA_EIv1.0_2681750"/>
</dbReference>
<dbReference type="EnsemblPlants" id="TraesPARA_EIv1.0_2682160.1">
    <property type="protein sequence ID" value="TraesPARA_EIv1.0_2682160.1.CDS1"/>
    <property type="gene ID" value="TraesPARA_EIv1.0_2682160"/>
</dbReference>
<dbReference type="GeneID" id="803128"/>
<dbReference type="Gramene" id="TraesCS2D03G0659500.1">
    <property type="protein sequence ID" value="TraesCS2D03G0659500.1.CDS1"/>
    <property type="gene ID" value="TraesCS2D03G0659500"/>
</dbReference>
<dbReference type="Gramene" id="TraesKAR6B01G0220240.1">
    <property type="protein sequence ID" value="cds.TraesKAR6B01G0220240.1"/>
    <property type="gene ID" value="TraesKAR6B01G0220240"/>
</dbReference>
<dbReference type="Gramene" id="TraesKARUn01G0029790.1">
    <property type="protein sequence ID" value="cds.TraesKARUn01G0029790.1"/>
    <property type="gene ID" value="TraesKARUn01G0029790"/>
</dbReference>
<dbReference type="Gramene" id="TraesKARUn01G0031890.1">
    <property type="protein sequence ID" value="cds.TraesKARUn01G0031890.1"/>
    <property type="gene ID" value="TraesKARUn01G0031890"/>
</dbReference>
<dbReference type="Gramene" id="TraesKARUn01G0036600.1">
    <property type="protein sequence ID" value="cds.TraesKARUn01G0036600.1"/>
    <property type="gene ID" value="TraesKARUn01G0036600"/>
</dbReference>
<dbReference type="Gramene" id="TraesKARUn01G0065640.1">
    <property type="protein sequence ID" value="cds.TraesKARUn01G0065640.1"/>
    <property type="gene ID" value="TraesKARUn01G0065640"/>
</dbReference>
<dbReference type="Gramene" id="TraesKARUn01G0066420.1">
    <property type="protein sequence ID" value="cds.TraesKARUn01G0066420.1"/>
    <property type="gene ID" value="TraesKARUn01G0066420"/>
</dbReference>
<dbReference type="Gramene" id="TraesKARUn01G0066600.1">
    <property type="protein sequence ID" value="cds.TraesKARUn01G0066600.1"/>
    <property type="gene ID" value="TraesKARUn01G0066600"/>
</dbReference>
<dbReference type="Gramene" id="TraesKARUn01G0067220.1">
    <property type="protein sequence ID" value="cds.TraesKARUn01G0067220.1"/>
    <property type="gene ID" value="TraesKARUn01G0067220"/>
</dbReference>
<dbReference type="Gramene" id="TraesKARUn01G0068100.1">
    <property type="protein sequence ID" value="cds.TraesKARUn01G0068100.1"/>
    <property type="gene ID" value="TraesKARUn01G0068100"/>
</dbReference>
<dbReference type="Gramene" id="TraesKARUn01G0068320.1">
    <property type="protein sequence ID" value="cds.TraesKARUn01G0068320.1"/>
    <property type="gene ID" value="TraesKARUn01G0068320"/>
</dbReference>
<dbReference type="Gramene" id="TraesKARUn01G0068390.1">
    <property type="protein sequence ID" value="cds.TraesKARUn01G0068390.1"/>
    <property type="gene ID" value="TraesKARUn01G0068390"/>
</dbReference>
<dbReference type="Gramene" id="TraesKARUn01G0068530.1">
    <property type="protein sequence ID" value="cds.TraesKARUn01G0068530.1"/>
    <property type="gene ID" value="TraesKARUn01G0068530"/>
</dbReference>
<dbReference type="Gramene" id="TraesKARUn01G0068710.1">
    <property type="protein sequence ID" value="cds.TraesKARUn01G0068710.1"/>
    <property type="gene ID" value="TraesKARUn01G0068710"/>
</dbReference>
<dbReference type="Gramene" id="TraesKARUn01G0068760.1">
    <property type="protein sequence ID" value="cds.TraesKARUn01G0068760.1"/>
    <property type="gene ID" value="TraesKARUn01G0068760"/>
</dbReference>
<dbReference type="Gramene" id="TraesKARUn01G0069390.1">
    <property type="protein sequence ID" value="cds.TraesKARUn01G0069390.1"/>
    <property type="gene ID" value="TraesKARUn01G0069390"/>
</dbReference>
<dbReference type="Gramene" id="TraesKARUn01G0070310.1">
    <property type="protein sequence ID" value="cds.TraesKARUn01G0070310.1"/>
    <property type="gene ID" value="TraesKARUn01G0070310"/>
</dbReference>
<dbReference type="Gramene" id="TraesKARUn01G0071120.1">
    <property type="protein sequence ID" value="cds.TraesKARUn01G0071120.1"/>
    <property type="gene ID" value="TraesKARUn01G0071120"/>
</dbReference>
<dbReference type="Gramene" id="TraesKARUn01G0072330.1">
    <property type="protein sequence ID" value="cds.TraesKARUn01G0072330.1"/>
    <property type="gene ID" value="TraesKARUn01G0072330"/>
</dbReference>
<dbReference type="Gramene" id="TraesKARUn01G0074150.1">
    <property type="protein sequence ID" value="cds.TraesKARUn01G0074150.1"/>
    <property type="gene ID" value="TraesKARUn01G0074150"/>
</dbReference>
<dbReference type="Gramene" id="TraesKARUn01G0075450.1">
    <property type="protein sequence ID" value="cds.TraesKARUn01G0075450.1"/>
    <property type="gene ID" value="TraesKARUn01G0075450"/>
</dbReference>
<dbReference type="Gramene" id="TraesKARUn01G0076120.1">
    <property type="protein sequence ID" value="cds.TraesKARUn01G0076120.1"/>
    <property type="gene ID" value="TraesKARUn01G0076120"/>
</dbReference>
<dbReference type="Gramene" id="TraesKARUn01G0077150.1">
    <property type="protein sequence ID" value="cds.TraesKARUn01G0077150.1"/>
    <property type="gene ID" value="TraesKARUn01G0077150"/>
</dbReference>
<dbReference type="Gramene" id="TraesKARUn01G0078910.1">
    <property type="protein sequence ID" value="cds.TraesKARUn01G0078910.1"/>
    <property type="gene ID" value="TraesKARUn01G0078910"/>
</dbReference>
<dbReference type="Gramene" id="TraesKARUn01G0081070.1">
    <property type="protein sequence ID" value="cds.TraesKARUn01G0081070.1"/>
    <property type="gene ID" value="TraesKARUn01G0081070"/>
</dbReference>
<dbReference type="Gramene" id="TraesKARUn01G0084140.1">
    <property type="protein sequence ID" value="cds.TraesKARUn01G0084140.1"/>
    <property type="gene ID" value="TraesKARUn01G0084140"/>
</dbReference>
<dbReference type="Gramene" id="TraesKARUn01G0085090.1">
    <property type="protein sequence ID" value="cds.TraesKARUn01G0085090.1"/>
    <property type="gene ID" value="TraesKARUn01G0085090"/>
</dbReference>
<dbReference type="Gramene" id="TraesKARUn01G0085410.1">
    <property type="protein sequence ID" value="cds.TraesKARUn01G0085410.1"/>
    <property type="gene ID" value="TraesKARUn01G0085410"/>
</dbReference>
<dbReference type="Gramene" id="TraesKARUn01G0088710.1">
    <property type="protein sequence ID" value="cds.TraesKARUn01G0088710.1"/>
    <property type="gene ID" value="TraesKARUn01G0088710"/>
</dbReference>
<dbReference type="Gramene" id="TraesKARUn01G0095670.1">
    <property type="protein sequence ID" value="cds.TraesKARUn01G0095670.1"/>
    <property type="gene ID" value="TraesKARUn01G0095670"/>
</dbReference>
<dbReference type="Gramene" id="TraesKARUn01G0098060.1">
    <property type="protein sequence ID" value="cds.TraesKARUn01G0098060.1"/>
    <property type="gene ID" value="TraesKARUn01G0098060"/>
</dbReference>
<dbReference type="Gramene" id="TraesKARUn01G0100860.1">
    <property type="protein sequence ID" value="cds.TraesKARUn01G0100860.1"/>
    <property type="gene ID" value="TraesKARUn01G0100860"/>
</dbReference>
<dbReference type="Gramene" id="TraesKARUn01G0107170.1">
    <property type="protein sequence ID" value="cds.TraesKARUn01G0107170.1"/>
    <property type="gene ID" value="TraesKARUn01G0107170"/>
</dbReference>
<dbReference type="Gramene" id="TraesKARUn01G0109070.1">
    <property type="protein sequence ID" value="cds.TraesKARUn01G0109070.1"/>
    <property type="gene ID" value="TraesKARUn01G0109070"/>
</dbReference>
<dbReference type="Gramene" id="TraesKARUn01G0109410.1">
    <property type="protein sequence ID" value="cds.TraesKARUn01G0109410.1"/>
    <property type="gene ID" value="TraesKARUn01G0109410"/>
</dbReference>
<dbReference type="Gramene" id="TraesKARUn01G0109460.1">
    <property type="protein sequence ID" value="cds.TraesKARUn01G0109460.1"/>
    <property type="gene ID" value="TraesKARUn01G0109460"/>
</dbReference>
<dbReference type="Gramene" id="TraesKARUn01G0109780.1">
    <property type="protein sequence ID" value="cds.TraesKARUn01G0109780.1"/>
    <property type="gene ID" value="TraesKARUn01G0109780"/>
</dbReference>
<dbReference type="Gramene" id="TraesKARUn01G0113510.1">
    <property type="protein sequence ID" value="cds.TraesKARUn01G0113510.1"/>
    <property type="gene ID" value="TraesKARUn01G0113510"/>
</dbReference>
<dbReference type="Gramene" id="TraesKARUn01G0116130.1">
    <property type="protein sequence ID" value="cds.TraesKARUn01G0116130.1"/>
    <property type="gene ID" value="TraesKARUn01G0116130"/>
</dbReference>
<dbReference type="Gramene" id="TraesKARUn01G0116330.1">
    <property type="protein sequence ID" value="cds.TraesKARUn01G0116330.1"/>
    <property type="gene ID" value="TraesKARUn01G0116330"/>
</dbReference>
<dbReference type="Gramene" id="TraesKARUn01G0118780.1">
    <property type="protein sequence ID" value="cds.TraesKARUn01G0118780.1"/>
    <property type="gene ID" value="TraesKARUn01G0118780"/>
</dbReference>
<dbReference type="Gramene" id="TraesKARUn01G0118890.1">
    <property type="protein sequence ID" value="cds.TraesKARUn01G0118890.1"/>
    <property type="gene ID" value="TraesKARUn01G0118890"/>
</dbReference>
<dbReference type="Gramene" id="TraesKARUn01G0118950.1">
    <property type="protein sequence ID" value="cds.TraesKARUn01G0118950.1"/>
    <property type="gene ID" value="TraesKARUn01G0118950"/>
</dbReference>
<dbReference type="Gramene" id="TraesKARUn01G0122640.1">
    <property type="protein sequence ID" value="cds.TraesKARUn01G0122640.1"/>
    <property type="gene ID" value="TraesKARUn01G0122640"/>
</dbReference>
<dbReference type="Gramene" id="TraesKARUn01G0124470.1">
    <property type="protein sequence ID" value="cds.TraesKARUn01G0124470.1"/>
    <property type="gene ID" value="TraesKARUn01G0124470"/>
</dbReference>
<dbReference type="Gramene" id="TraesKARUn01G0125760.1">
    <property type="protein sequence ID" value="cds.TraesKARUn01G0125760.1"/>
    <property type="gene ID" value="TraesKARUn01G0125760"/>
</dbReference>
<dbReference type="Gramene" id="TraesKARUn01G0128530.1">
    <property type="protein sequence ID" value="cds.TraesKARUn01G0128530.1"/>
    <property type="gene ID" value="TraesKARUn01G0128530"/>
</dbReference>
<dbReference type="Gramene" id="TraesKARUn01G0130000.1">
    <property type="protein sequence ID" value="cds.TraesKARUn01G0130000.1"/>
    <property type="gene ID" value="TraesKARUn01G0130000"/>
</dbReference>
<dbReference type="Gramene" id="TraesKARUn01G0132390.1">
    <property type="protein sequence ID" value="cds.TraesKARUn01G0132390.1"/>
    <property type="gene ID" value="TraesKARUn01G0132390"/>
</dbReference>
<dbReference type="Gramene" id="TraesKARUn01G0151560.1">
    <property type="protein sequence ID" value="cds.TraesKARUn01G0151560.1"/>
    <property type="gene ID" value="TraesKARUn01G0151560"/>
</dbReference>
<dbReference type="Gramene" id="TraesKARUn01G0156930.1">
    <property type="protein sequence ID" value="cds.TraesKARUn01G0156930.1"/>
    <property type="gene ID" value="TraesKARUn01G0156930"/>
</dbReference>
<dbReference type="Gramene" id="TraesKARUn01G0159660.1">
    <property type="protein sequence ID" value="cds.TraesKARUn01G0159660.1"/>
    <property type="gene ID" value="TraesKARUn01G0159660"/>
</dbReference>
<dbReference type="Gramene" id="TraesKARUn01G0169840.1">
    <property type="protein sequence ID" value="cds.TraesKARUn01G0169840.1"/>
    <property type="gene ID" value="TraesKARUn01G0169840"/>
</dbReference>
<dbReference type="Gramene" id="TraesKARUn01G0173020.1">
    <property type="protein sequence ID" value="cds.TraesKARUn01G0173020.1"/>
    <property type="gene ID" value="TraesKARUn01G0173020"/>
</dbReference>
<dbReference type="Gramene" id="TraesKARUn01G0180360.1">
    <property type="protein sequence ID" value="cds.TraesKARUn01G0180360.1"/>
    <property type="gene ID" value="TraesKARUn01G0180360"/>
</dbReference>
<dbReference type="Gramene" id="TraesKARUn01G0180680.1">
    <property type="protein sequence ID" value="cds.TraesKARUn01G0180680.1"/>
    <property type="gene ID" value="TraesKARUn01G0180680"/>
</dbReference>
<dbReference type="Gramene" id="TraesKARUn01G0181320.1">
    <property type="protein sequence ID" value="cds.TraesKARUn01G0181320.1"/>
    <property type="gene ID" value="TraesKARUn01G0181320"/>
</dbReference>
<dbReference type="Gramene" id="TraesKARUn01G0182650.1">
    <property type="protein sequence ID" value="cds.TraesKARUn01G0182650.1"/>
    <property type="gene ID" value="TraesKARUn01G0182650"/>
</dbReference>
<dbReference type="Gramene" id="TraesKARUn01G0184130.1">
    <property type="protein sequence ID" value="cds.TraesKARUn01G0184130.1"/>
    <property type="gene ID" value="TraesKARUn01G0184130"/>
</dbReference>
<dbReference type="Gramene" id="TraesKARUn01G0188860.1">
    <property type="protein sequence ID" value="cds.TraesKARUn01G0188860.1"/>
    <property type="gene ID" value="TraesKARUn01G0188860"/>
</dbReference>
<dbReference type="Gramene" id="TraesPARA_EIv1.0_2055020.1">
    <property type="protein sequence ID" value="TraesPARA_EIv1.0_2055020.1.CDS1"/>
    <property type="gene ID" value="TraesPARA_EIv1.0_2055020"/>
</dbReference>
<dbReference type="Gramene" id="TraesPARA_EIv1.0_2055620.1">
    <property type="protein sequence ID" value="TraesPARA_EIv1.0_2055620.1.CDS1"/>
    <property type="gene ID" value="TraesPARA_EIv1.0_2055620"/>
</dbReference>
<dbReference type="Gramene" id="TraesPARA_EIv1.0_2643410.1">
    <property type="protein sequence ID" value="TraesPARA_EIv1.0_2643410.1.CDS1"/>
    <property type="gene ID" value="TraesPARA_EIv1.0_2643410"/>
</dbReference>
<dbReference type="Gramene" id="TraesPARA_EIv1.0_2643630.1">
    <property type="protein sequence ID" value="TraesPARA_EIv1.0_2643630.1.CDS1"/>
    <property type="gene ID" value="TraesPARA_EIv1.0_2643630"/>
</dbReference>
<dbReference type="Gramene" id="TraesPARA_EIv1.0_2643990.1">
    <property type="protein sequence ID" value="TraesPARA_EIv1.0_2643990.1.CDS1"/>
    <property type="gene ID" value="TraesPARA_EIv1.0_2643990"/>
</dbReference>
<dbReference type="Gramene" id="TraesPARA_EIv1.0_2644100.1">
    <property type="protein sequence ID" value="TraesPARA_EIv1.0_2644100.1.CDS1"/>
    <property type="gene ID" value="TraesPARA_EIv1.0_2644100"/>
</dbReference>
<dbReference type="Gramene" id="TraesPARA_EIv1.0_2645570.1">
    <property type="protein sequence ID" value="TraesPARA_EIv1.0_2645570.1.CDS1"/>
    <property type="gene ID" value="TraesPARA_EIv1.0_2645570"/>
</dbReference>
<dbReference type="Gramene" id="TraesPARA_EIv1.0_2645740.1">
    <property type="protein sequence ID" value="TraesPARA_EIv1.0_2645740.1.CDS1"/>
    <property type="gene ID" value="TraesPARA_EIv1.0_2645740"/>
</dbReference>
<dbReference type="Gramene" id="TraesPARA_EIv1.0_2645940.1">
    <property type="protein sequence ID" value="TraesPARA_EIv1.0_2645940.1.CDS1"/>
    <property type="gene ID" value="TraesPARA_EIv1.0_2645940"/>
</dbReference>
<dbReference type="Gramene" id="TraesPARA_EIv1.0_2647060.1">
    <property type="protein sequence ID" value="TraesPARA_EIv1.0_2647060.1.CDS1"/>
    <property type="gene ID" value="TraesPARA_EIv1.0_2647060"/>
</dbReference>
<dbReference type="Gramene" id="TraesPARA_EIv1.0_2647900.1">
    <property type="protein sequence ID" value="TraesPARA_EIv1.0_2647900.1.CDS1"/>
    <property type="gene ID" value="TraesPARA_EIv1.0_2647900"/>
</dbReference>
<dbReference type="Gramene" id="TraesPARA_EIv1.0_2648540.1">
    <property type="protein sequence ID" value="TraesPARA_EIv1.0_2648540.1.CDS1"/>
    <property type="gene ID" value="TraesPARA_EIv1.0_2648540"/>
</dbReference>
<dbReference type="Gramene" id="TraesPARA_EIv1.0_2648710.1">
    <property type="protein sequence ID" value="TraesPARA_EIv1.0_2648710.1.CDS1"/>
    <property type="gene ID" value="TraesPARA_EIv1.0_2648710"/>
</dbReference>
<dbReference type="Gramene" id="TraesPARA_EIv1.0_2648960.1">
    <property type="protein sequence ID" value="TraesPARA_EIv1.0_2648960.1.CDS1"/>
    <property type="gene ID" value="TraesPARA_EIv1.0_2648960"/>
</dbReference>
<dbReference type="Gramene" id="TraesPARA_EIv1.0_2649130.1">
    <property type="protein sequence ID" value="TraesPARA_EIv1.0_2649130.1.CDS1"/>
    <property type="gene ID" value="TraesPARA_EIv1.0_2649130"/>
</dbReference>
<dbReference type="Gramene" id="TraesPARA_EIv1.0_2649230.1">
    <property type="protein sequence ID" value="TraesPARA_EIv1.0_2649230.1.CDS1"/>
    <property type="gene ID" value="TraesPARA_EIv1.0_2649230"/>
</dbReference>
<dbReference type="Gramene" id="TraesPARA_EIv1.0_2649350.1">
    <property type="protein sequence ID" value="TraesPARA_EIv1.0_2649350.1.CDS1"/>
    <property type="gene ID" value="TraesPARA_EIv1.0_2649350"/>
</dbReference>
<dbReference type="Gramene" id="TraesPARA_EIv1.0_2650070.1">
    <property type="protein sequence ID" value="TraesPARA_EIv1.0_2650070.1.CDS1"/>
    <property type="gene ID" value="TraesPARA_EIv1.0_2650070"/>
</dbReference>
<dbReference type="Gramene" id="TraesPARA_EIv1.0_2650250.1">
    <property type="protein sequence ID" value="TraesPARA_EIv1.0_2650250.1.CDS1"/>
    <property type="gene ID" value="TraesPARA_EIv1.0_2650250"/>
</dbReference>
<dbReference type="Gramene" id="TraesPARA_EIv1.0_2650480.1">
    <property type="protein sequence ID" value="TraesPARA_EIv1.0_2650480.1.CDS1"/>
    <property type="gene ID" value="TraesPARA_EIv1.0_2650480"/>
</dbReference>
<dbReference type="Gramene" id="TraesPARA_EIv1.0_2651220.1">
    <property type="protein sequence ID" value="TraesPARA_EIv1.0_2651220.1.CDS1"/>
    <property type="gene ID" value="TraesPARA_EIv1.0_2651220"/>
</dbReference>
<dbReference type="Gramene" id="TraesPARA_EIv1.0_2651330.1">
    <property type="protein sequence ID" value="TraesPARA_EIv1.0_2651330.1.CDS1"/>
    <property type="gene ID" value="TraesPARA_EIv1.0_2651330"/>
</dbReference>
<dbReference type="Gramene" id="TraesPARA_EIv1.0_2652330.1">
    <property type="protein sequence ID" value="TraesPARA_EIv1.0_2652330.1.CDS1"/>
    <property type="gene ID" value="TraesPARA_EIv1.0_2652330"/>
</dbReference>
<dbReference type="Gramene" id="TraesPARA_EIv1.0_2652850.1">
    <property type="protein sequence ID" value="TraesPARA_EIv1.0_2652850.1.CDS1"/>
    <property type="gene ID" value="TraesPARA_EIv1.0_2652850"/>
</dbReference>
<dbReference type="Gramene" id="TraesPARA_EIv1.0_2653150.1">
    <property type="protein sequence ID" value="TraesPARA_EIv1.0_2653150.1.CDS1"/>
    <property type="gene ID" value="TraesPARA_EIv1.0_2653150"/>
</dbReference>
<dbReference type="Gramene" id="TraesPARA_EIv1.0_2653370.1">
    <property type="protein sequence ID" value="TraesPARA_EIv1.0_2653370.1.CDS1"/>
    <property type="gene ID" value="TraesPARA_EIv1.0_2653370"/>
</dbReference>
<dbReference type="Gramene" id="TraesPARA_EIv1.0_2653980.1">
    <property type="protein sequence ID" value="TraesPARA_EIv1.0_2653980.1.CDS1"/>
    <property type="gene ID" value="TraesPARA_EIv1.0_2653980"/>
</dbReference>
<dbReference type="Gramene" id="TraesPARA_EIv1.0_2654210.1">
    <property type="protein sequence ID" value="TraesPARA_EIv1.0_2654210.1.CDS1"/>
    <property type="gene ID" value="TraesPARA_EIv1.0_2654210"/>
</dbReference>
<dbReference type="Gramene" id="TraesPARA_EIv1.0_2654310.1">
    <property type="protein sequence ID" value="TraesPARA_EIv1.0_2654310.1.CDS1"/>
    <property type="gene ID" value="TraesPARA_EIv1.0_2654310"/>
</dbReference>
<dbReference type="Gramene" id="TraesPARA_EIv1.0_2655240.1">
    <property type="protein sequence ID" value="TraesPARA_EIv1.0_2655240.1.CDS1"/>
    <property type="gene ID" value="TraesPARA_EIv1.0_2655240"/>
</dbReference>
<dbReference type="Gramene" id="TraesPARA_EIv1.0_2655630.1">
    <property type="protein sequence ID" value="TraesPARA_EIv1.0_2655630.1.CDS1"/>
    <property type="gene ID" value="TraesPARA_EIv1.0_2655630"/>
</dbReference>
<dbReference type="Gramene" id="TraesPARA_EIv1.0_2656120.1">
    <property type="protein sequence ID" value="TraesPARA_EIv1.0_2656120.1.CDS1"/>
    <property type="gene ID" value="TraesPARA_EIv1.0_2656120"/>
</dbReference>
<dbReference type="Gramene" id="TraesPARA_EIv1.0_2656390.1">
    <property type="protein sequence ID" value="TraesPARA_EIv1.0_2656390.1.CDS1"/>
    <property type="gene ID" value="TraesPARA_EIv1.0_2656390"/>
</dbReference>
<dbReference type="Gramene" id="TraesPARA_EIv1.0_2656830.1">
    <property type="protein sequence ID" value="TraesPARA_EIv1.0_2656830.1.CDS1"/>
    <property type="gene ID" value="TraesPARA_EIv1.0_2656830"/>
</dbReference>
<dbReference type="Gramene" id="TraesPARA_EIv1.0_2657030.1">
    <property type="protein sequence ID" value="TraesPARA_EIv1.0_2657030.1.CDS1"/>
    <property type="gene ID" value="TraesPARA_EIv1.0_2657030"/>
</dbReference>
<dbReference type="Gramene" id="TraesPARA_EIv1.0_2657120.1">
    <property type="protein sequence ID" value="TraesPARA_EIv1.0_2657120.1.CDS1"/>
    <property type="gene ID" value="TraesPARA_EIv1.0_2657120"/>
</dbReference>
<dbReference type="Gramene" id="TraesPARA_EIv1.0_2658470.1">
    <property type="protein sequence ID" value="TraesPARA_EIv1.0_2658470.1.CDS1"/>
    <property type="gene ID" value="TraesPARA_EIv1.0_2658470"/>
</dbReference>
<dbReference type="Gramene" id="TraesPARA_EIv1.0_2659980.1">
    <property type="protein sequence ID" value="TraesPARA_EIv1.0_2659980.1.CDS1"/>
    <property type="gene ID" value="TraesPARA_EIv1.0_2659980"/>
</dbReference>
<dbReference type="Gramene" id="TraesPARA_EIv1.0_2660070.1">
    <property type="protein sequence ID" value="TraesPARA_EIv1.0_2660070.1.CDS1"/>
    <property type="gene ID" value="TraesPARA_EIv1.0_2660070"/>
</dbReference>
<dbReference type="Gramene" id="TraesPARA_EIv1.0_2662920.1">
    <property type="protein sequence ID" value="TraesPARA_EIv1.0_2662920.1.CDS1"/>
    <property type="gene ID" value="TraesPARA_EIv1.0_2662920"/>
</dbReference>
<dbReference type="Gramene" id="TraesPARA_EIv1.0_2663070.1">
    <property type="protein sequence ID" value="TraesPARA_EIv1.0_2663070.1.CDS1"/>
    <property type="gene ID" value="TraesPARA_EIv1.0_2663070"/>
</dbReference>
<dbReference type="Gramene" id="TraesPARA_EIv1.0_2663170.1">
    <property type="protein sequence ID" value="TraesPARA_EIv1.0_2663170.1.CDS1"/>
    <property type="gene ID" value="TraesPARA_EIv1.0_2663170"/>
</dbReference>
<dbReference type="Gramene" id="TraesPARA_EIv1.0_2663520.1">
    <property type="protein sequence ID" value="TraesPARA_EIv1.0_2663520.1.CDS1"/>
    <property type="gene ID" value="TraesPARA_EIv1.0_2663520"/>
</dbReference>
<dbReference type="Gramene" id="TraesPARA_EIv1.0_2663650.1">
    <property type="protein sequence ID" value="TraesPARA_EIv1.0_2663650.1.CDS1"/>
    <property type="gene ID" value="TraesPARA_EIv1.0_2663650"/>
</dbReference>
<dbReference type="Gramene" id="TraesPARA_EIv1.0_2663690.1">
    <property type="protein sequence ID" value="TraesPARA_EIv1.0_2663690.1.CDS1"/>
    <property type="gene ID" value="TraesPARA_EIv1.0_2663690"/>
</dbReference>
<dbReference type="Gramene" id="TraesPARA_EIv1.0_2666360.1">
    <property type="protein sequence ID" value="TraesPARA_EIv1.0_2666360.1.CDS1"/>
    <property type="gene ID" value="TraesPARA_EIv1.0_2666360"/>
</dbReference>
<dbReference type="Gramene" id="TraesPARA_EIv1.0_2666660.1">
    <property type="protein sequence ID" value="TraesPARA_EIv1.0_2666660.1.CDS1"/>
    <property type="gene ID" value="TraesPARA_EIv1.0_2666660"/>
</dbReference>
<dbReference type="Gramene" id="TraesPARA_EIv1.0_2666760.1">
    <property type="protein sequence ID" value="TraesPARA_EIv1.0_2666760.1.CDS1"/>
    <property type="gene ID" value="TraesPARA_EIv1.0_2666760"/>
</dbReference>
<dbReference type="Gramene" id="TraesPARA_EIv1.0_2666950.1">
    <property type="protein sequence ID" value="TraesPARA_EIv1.0_2666950.1.CDS1"/>
    <property type="gene ID" value="TraesPARA_EIv1.0_2666950"/>
</dbReference>
<dbReference type="Gramene" id="TraesPARA_EIv1.0_2667080.1">
    <property type="protein sequence ID" value="TraesPARA_EIv1.0_2667080.1.CDS1"/>
    <property type="gene ID" value="TraesPARA_EIv1.0_2667080"/>
</dbReference>
<dbReference type="Gramene" id="TraesPARA_EIv1.0_2668490.1">
    <property type="protein sequence ID" value="TraesPARA_EIv1.0_2668490.1.CDS1"/>
    <property type="gene ID" value="TraesPARA_EIv1.0_2668490"/>
</dbReference>
<dbReference type="Gramene" id="TraesPARA_EIv1.0_2669270.1">
    <property type="protein sequence ID" value="TraesPARA_EIv1.0_2669270.1.CDS1"/>
    <property type="gene ID" value="TraesPARA_EIv1.0_2669270"/>
</dbReference>
<dbReference type="Gramene" id="TraesPARA_EIv1.0_2669330.1">
    <property type="protein sequence ID" value="TraesPARA_EIv1.0_2669330.1.CDS1"/>
    <property type="gene ID" value="TraesPARA_EIv1.0_2669330"/>
</dbReference>
<dbReference type="Gramene" id="TraesPARA_EIv1.0_2669520.1">
    <property type="protein sequence ID" value="TraesPARA_EIv1.0_2669520.1.CDS1"/>
    <property type="gene ID" value="TraesPARA_EIv1.0_2669520"/>
</dbReference>
<dbReference type="Gramene" id="TraesPARA_EIv1.0_2669960.1">
    <property type="protein sequence ID" value="TraesPARA_EIv1.0_2669960.1.CDS1"/>
    <property type="gene ID" value="TraesPARA_EIv1.0_2669960"/>
</dbReference>
<dbReference type="Gramene" id="TraesPARA_EIv1.0_2670200.1">
    <property type="protein sequence ID" value="TraesPARA_EIv1.0_2670200.1.CDS1"/>
    <property type="gene ID" value="TraesPARA_EIv1.0_2670200"/>
</dbReference>
<dbReference type="Gramene" id="TraesPARA_EIv1.0_2670420.1">
    <property type="protein sequence ID" value="TraesPARA_EIv1.0_2670420.1.CDS1"/>
    <property type="gene ID" value="TraesPARA_EIv1.0_2670420"/>
</dbReference>
<dbReference type="Gramene" id="TraesPARA_EIv1.0_2671460.1">
    <property type="protein sequence ID" value="TraesPARA_EIv1.0_2671460.1.CDS1"/>
    <property type="gene ID" value="TraesPARA_EIv1.0_2671460"/>
</dbReference>
<dbReference type="Gramene" id="TraesPARA_EIv1.0_2671850.1">
    <property type="protein sequence ID" value="TraesPARA_EIv1.0_2671850.1.CDS1"/>
    <property type="gene ID" value="TraesPARA_EIv1.0_2671850"/>
</dbReference>
<dbReference type="Gramene" id="TraesPARA_EIv1.0_2672850.1">
    <property type="protein sequence ID" value="TraesPARA_EIv1.0_2672850.1.CDS1"/>
    <property type="gene ID" value="TraesPARA_EIv1.0_2672850"/>
</dbReference>
<dbReference type="Gramene" id="TraesPARA_EIv1.0_2673720.1">
    <property type="protein sequence ID" value="TraesPARA_EIv1.0_2673720.1.CDS1"/>
    <property type="gene ID" value="TraesPARA_EIv1.0_2673720"/>
</dbReference>
<dbReference type="Gramene" id="TraesPARA_EIv1.0_2674270.1">
    <property type="protein sequence ID" value="TraesPARA_EIv1.0_2674270.1.CDS1"/>
    <property type="gene ID" value="TraesPARA_EIv1.0_2674270"/>
</dbReference>
<dbReference type="Gramene" id="TraesPARA_EIv1.0_2677450.1">
    <property type="protein sequence ID" value="TraesPARA_EIv1.0_2677450.1.CDS1"/>
    <property type="gene ID" value="TraesPARA_EIv1.0_2677450"/>
</dbReference>
<dbReference type="Gramene" id="TraesPARA_EIv1.0_2680140.1">
    <property type="protein sequence ID" value="TraesPARA_EIv1.0_2680140.1.CDS1"/>
    <property type="gene ID" value="TraesPARA_EIv1.0_2680140"/>
</dbReference>
<dbReference type="Gramene" id="TraesPARA_EIv1.0_2680500.1">
    <property type="protein sequence ID" value="TraesPARA_EIv1.0_2680500.1.CDS1"/>
    <property type="gene ID" value="TraesPARA_EIv1.0_2680500"/>
</dbReference>
<dbReference type="Gramene" id="TraesPARA_EIv1.0_2681750.1">
    <property type="protein sequence ID" value="TraesPARA_EIv1.0_2681750.1.CDS1"/>
    <property type="gene ID" value="TraesPARA_EIv1.0_2681750"/>
</dbReference>
<dbReference type="Gramene" id="TraesPARA_EIv1.0_2682160.1">
    <property type="protein sequence ID" value="TraesPARA_EIv1.0_2682160.1.CDS1"/>
    <property type="gene ID" value="TraesPARA_EIv1.0_2682160"/>
</dbReference>
<dbReference type="KEGG" id="taes:803128"/>
<dbReference type="eggNOG" id="KOG1350">
    <property type="taxonomic scope" value="Eukaryota"/>
</dbReference>
<dbReference type="HOGENOM" id="CLU_022398_0_2_1"/>
<dbReference type="Proteomes" id="UP000019116">
    <property type="component" value="Chloroplast"/>
</dbReference>
<dbReference type="ExpressionAtlas" id="P20858">
    <property type="expression patterns" value="differential"/>
</dbReference>
<dbReference type="GO" id="GO:0009535">
    <property type="term" value="C:chloroplast thylakoid membrane"/>
    <property type="evidence" value="ECO:0007669"/>
    <property type="project" value="UniProtKB-SubCell"/>
</dbReference>
<dbReference type="GO" id="GO:0005739">
    <property type="term" value="C:mitochondrion"/>
    <property type="evidence" value="ECO:0007669"/>
    <property type="project" value="GOC"/>
</dbReference>
<dbReference type="GO" id="GO:0045259">
    <property type="term" value="C:proton-transporting ATP synthase complex"/>
    <property type="evidence" value="ECO:0007669"/>
    <property type="project" value="UniProtKB-KW"/>
</dbReference>
<dbReference type="GO" id="GO:0005524">
    <property type="term" value="F:ATP binding"/>
    <property type="evidence" value="ECO:0007669"/>
    <property type="project" value="UniProtKB-UniRule"/>
</dbReference>
<dbReference type="GO" id="GO:0016887">
    <property type="term" value="F:ATP hydrolysis activity"/>
    <property type="evidence" value="ECO:0007669"/>
    <property type="project" value="InterPro"/>
</dbReference>
<dbReference type="GO" id="GO:0046933">
    <property type="term" value="F:proton-transporting ATP synthase activity, rotational mechanism"/>
    <property type="evidence" value="ECO:0007669"/>
    <property type="project" value="UniProtKB-UniRule"/>
</dbReference>
<dbReference type="GO" id="GO:0042776">
    <property type="term" value="P:proton motive force-driven mitochondrial ATP synthesis"/>
    <property type="evidence" value="ECO:0000318"/>
    <property type="project" value="GO_Central"/>
</dbReference>
<dbReference type="CDD" id="cd18110">
    <property type="entry name" value="ATP-synt_F1_beta_C"/>
    <property type="match status" value="1"/>
</dbReference>
<dbReference type="CDD" id="cd18115">
    <property type="entry name" value="ATP-synt_F1_beta_N"/>
    <property type="match status" value="1"/>
</dbReference>
<dbReference type="CDD" id="cd01133">
    <property type="entry name" value="F1-ATPase_beta_CD"/>
    <property type="match status" value="1"/>
</dbReference>
<dbReference type="FunFam" id="1.10.1140.10:FF:000001">
    <property type="entry name" value="ATP synthase subunit beta"/>
    <property type="match status" value="1"/>
</dbReference>
<dbReference type="FunFam" id="3.40.50.12240:FF:000006">
    <property type="entry name" value="ATP synthase subunit beta"/>
    <property type="match status" value="1"/>
</dbReference>
<dbReference type="FunFam" id="3.40.50.300:FF:000026">
    <property type="entry name" value="ATP synthase subunit beta"/>
    <property type="match status" value="1"/>
</dbReference>
<dbReference type="FunFam" id="2.40.10.170:FF:000002">
    <property type="entry name" value="ATP synthase subunit beta, chloroplastic"/>
    <property type="match status" value="1"/>
</dbReference>
<dbReference type="Gene3D" id="2.40.10.170">
    <property type="match status" value="1"/>
</dbReference>
<dbReference type="Gene3D" id="1.10.1140.10">
    <property type="entry name" value="Bovine Mitochondrial F1-atpase, Atp Synthase Beta Chain, Chain D, domain 3"/>
    <property type="match status" value="1"/>
</dbReference>
<dbReference type="Gene3D" id="3.40.50.300">
    <property type="entry name" value="P-loop containing nucleotide triphosphate hydrolases"/>
    <property type="match status" value="1"/>
</dbReference>
<dbReference type="HAMAP" id="MF_01347">
    <property type="entry name" value="ATP_synth_beta_bact"/>
    <property type="match status" value="1"/>
</dbReference>
<dbReference type="InterPro" id="IPR003593">
    <property type="entry name" value="AAA+_ATPase"/>
</dbReference>
<dbReference type="InterPro" id="IPR055190">
    <property type="entry name" value="ATP-synt_VA_C"/>
</dbReference>
<dbReference type="InterPro" id="IPR005722">
    <property type="entry name" value="ATP_synth_F1_bsu"/>
</dbReference>
<dbReference type="InterPro" id="IPR020003">
    <property type="entry name" value="ATPase_a/bsu_AS"/>
</dbReference>
<dbReference type="InterPro" id="IPR050053">
    <property type="entry name" value="ATPase_alpha/beta_chains"/>
</dbReference>
<dbReference type="InterPro" id="IPR004100">
    <property type="entry name" value="ATPase_F1/V1/A1_a/bsu_N"/>
</dbReference>
<dbReference type="InterPro" id="IPR036121">
    <property type="entry name" value="ATPase_F1/V1/A1_a/bsu_N_sf"/>
</dbReference>
<dbReference type="InterPro" id="IPR000194">
    <property type="entry name" value="ATPase_F1/V1/A1_a/bsu_nucl-bd"/>
</dbReference>
<dbReference type="InterPro" id="IPR024034">
    <property type="entry name" value="ATPase_F1/V1_b/a_C"/>
</dbReference>
<dbReference type="InterPro" id="IPR027417">
    <property type="entry name" value="P-loop_NTPase"/>
</dbReference>
<dbReference type="NCBIfam" id="TIGR01039">
    <property type="entry name" value="atpD"/>
    <property type="match status" value="1"/>
</dbReference>
<dbReference type="PANTHER" id="PTHR15184">
    <property type="entry name" value="ATP SYNTHASE"/>
    <property type="match status" value="1"/>
</dbReference>
<dbReference type="PANTHER" id="PTHR15184:SF71">
    <property type="entry name" value="ATP SYNTHASE SUBUNIT BETA, MITOCHONDRIAL"/>
    <property type="match status" value="1"/>
</dbReference>
<dbReference type="Pfam" id="PF00006">
    <property type="entry name" value="ATP-synt_ab"/>
    <property type="match status" value="1"/>
</dbReference>
<dbReference type="Pfam" id="PF02874">
    <property type="entry name" value="ATP-synt_ab_N"/>
    <property type="match status" value="1"/>
</dbReference>
<dbReference type="Pfam" id="PF22919">
    <property type="entry name" value="ATP-synt_VA_C"/>
    <property type="match status" value="1"/>
</dbReference>
<dbReference type="SMART" id="SM00382">
    <property type="entry name" value="AAA"/>
    <property type="match status" value="1"/>
</dbReference>
<dbReference type="SUPFAM" id="SSF47917">
    <property type="entry name" value="C-terminal domain of alpha and beta subunits of F1 ATP synthase"/>
    <property type="match status" value="1"/>
</dbReference>
<dbReference type="SUPFAM" id="SSF50615">
    <property type="entry name" value="N-terminal domain of alpha and beta subunits of F1 ATP synthase"/>
    <property type="match status" value="1"/>
</dbReference>
<dbReference type="SUPFAM" id="SSF52540">
    <property type="entry name" value="P-loop containing nucleoside triphosphate hydrolases"/>
    <property type="match status" value="1"/>
</dbReference>
<dbReference type="PROSITE" id="PS00152">
    <property type="entry name" value="ATPASE_ALPHA_BETA"/>
    <property type="match status" value="1"/>
</dbReference>
<protein>
    <recommendedName>
        <fullName evidence="1">ATP synthase subunit beta, chloroplastic</fullName>
        <ecNumber evidence="1">7.1.2.2</ecNumber>
    </recommendedName>
    <alternativeName>
        <fullName evidence="1">ATP synthase F1 sector subunit beta</fullName>
    </alternativeName>
    <alternativeName>
        <fullName evidence="1">F-ATPase subunit beta</fullName>
    </alternativeName>
</protein>
<evidence type="ECO:0000255" key="1">
    <source>
        <dbReference type="HAMAP-Rule" id="MF_01347"/>
    </source>
</evidence>
<comment type="function">
    <text evidence="1">Produces ATP from ADP in the presence of a proton gradient across the membrane. The catalytic sites are hosted primarily by the beta subunits.</text>
</comment>
<comment type="catalytic activity">
    <reaction evidence="1">
        <text>ATP + H2O + 4 H(+)(in) = ADP + phosphate + 5 H(+)(out)</text>
        <dbReference type="Rhea" id="RHEA:57720"/>
        <dbReference type="ChEBI" id="CHEBI:15377"/>
        <dbReference type="ChEBI" id="CHEBI:15378"/>
        <dbReference type="ChEBI" id="CHEBI:30616"/>
        <dbReference type="ChEBI" id="CHEBI:43474"/>
        <dbReference type="ChEBI" id="CHEBI:456216"/>
        <dbReference type="EC" id="7.1.2.2"/>
    </reaction>
</comment>
<comment type="subunit">
    <text evidence="1">F-type ATPases have 2 components, CF(1) - the catalytic core - and CF(0) - the membrane proton channel. CF(1) has five subunits: alpha(3), beta(3), gamma(1), delta(1), epsilon(1). CF(0) has four main subunits: a(1), b(1), b'(1) and c(9-12).</text>
</comment>
<comment type="subcellular location">
    <subcellularLocation>
        <location evidence="1">Plastid</location>
        <location evidence="1">Chloroplast thylakoid membrane</location>
        <topology evidence="1">Peripheral membrane protein</topology>
    </subcellularLocation>
</comment>
<comment type="similarity">
    <text evidence="1">Belongs to the ATPase alpha/beta chains family.</text>
</comment>
<accession>P20858</accession>